<sequence>MATLTETITSLAQPFVHLEDTINSPPVKETIRPRNDTTITPPPTQWSYLCHPRVKEVQDEVDGYFLENWKFPSFKAVRTFLGAKFSEVTCLYFPLALDDRIHFACRLLTVLFLIDDVLEHMSFADGEAYNNRLIPISRGDVLPDRTKPEEFILYDLWESMRAHDAELANEVLEPTFVFMRAQTDRARLTIHELGHYLEYREKDVGKALLSALMRFSMGLRFSADELQGMKALEANCAKQLSVVNDIYSYDKEEEASRTGHKEGAFLCSAVKVLAEESKLGIPATKRVLWSMTREWETVHDEIVAEKIASPDGCSEAAKAYMKGLEYQMSGNEQWSKTTRRYN</sequence>
<organism>
    <name type="scientific">Penicillium rubens (strain ATCC 28089 / DSM 1075 / NRRL 1951 / Wisconsin 54-1255)</name>
    <name type="common">Penicillium chrysogenum</name>
    <dbReference type="NCBI Taxonomy" id="500485"/>
    <lineage>
        <taxon>Eukaryota</taxon>
        <taxon>Fungi</taxon>
        <taxon>Dikarya</taxon>
        <taxon>Ascomycota</taxon>
        <taxon>Pezizomycotina</taxon>
        <taxon>Eurotiomycetes</taxon>
        <taxon>Eurotiomycetidae</taxon>
        <taxon>Eurotiales</taxon>
        <taxon>Aspergillaceae</taxon>
        <taxon>Penicillium</taxon>
        <taxon>Penicillium chrysogenum species complex</taxon>
    </lineage>
</organism>
<reference key="1">
    <citation type="journal article" date="2008" name="Nat. Biotechnol.">
        <title>Genome sequencing and analysis of the filamentous fungus Penicillium chrysogenum.</title>
        <authorList>
            <person name="van den Berg M.A."/>
            <person name="Albang R."/>
            <person name="Albermann K."/>
            <person name="Badger J.H."/>
            <person name="Daran J.-M."/>
            <person name="Driessen A.J.M."/>
            <person name="Garcia-Estrada C."/>
            <person name="Fedorova N.D."/>
            <person name="Harris D.M."/>
            <person name="Heijne W.H.M."/>
            <person name="Joardar V.S."/>
            <person name="Kiel J.A.K.W."/>
            <person name="Kovalchuk A."/>
            <person name="Martin J.F."/>
            <person name="Nierman W.C."/>
            <person name="Nijland J.G."/>
            <person name="Pronk J.T."/>
            <person name="Roubos J.A."/>
            <person name="van der Klei I.J."/>
            <person name="van Peij N.N.M.E."/>
            <person name="Veenhuis M."/>
            <person name="von Doehren H."/>
            <person name="Wagner C."/>
            <person name="Wortman J.R."/>
            <person name="Bovenberg R.A.L."/>
        </authorList>
    </citation>
    <scope>NUCLEOTIDE SEQUENCE [LARGE SCALE GENOMIC DNA]</scope>
    <source>
        <strain>ATCC 28089 / DSM 1075 / NRRL 1951 / Wisconsin 54-1255</strain>
    </source>
</reference>
<reference key="2">
    <citation type="journal article" date="2014" name="Fungal Genet. Biol.">
        <title>Molecular characterization of the PR-toxin gene cluster in Penicillium roqueforti and Penicillium chrysogenum: cross talk of secondary metabolite pathways.</title>
        <authorList>
            <person name="Hidalgo P.I."/>
            <person name="Ullan R.V."/>
            <person name="Albillos S.M."/>
            <person name="Montero O."/>
            <person name="Fernandez-Bodega M.A."/>
            <person name="Garcia-Estrada C."/>
            <person name="Fernandez-Aguado M."/>
            <person name="Martin J.F."/>
        </authorList>
    </citation>
    <scope>FUNCTION</scope>
    <scope>INDUCTION</scope>
</reference>
<proteinExistence type="evidence at transcript level"/>
<gene>
    <name evidence="7" type="primary">pxr2</name>
    <name type="ORF">Pc12g06310</name>
</gene>
<evidence type="ECO:0000250" key="1">
    <source>
        <dbReference type="UniProtKB" id="Q03471"/>
    </source>
</evidence>
<evidence type="ECO:0000250" key="2">
    <source>
        <dbReference type="UniProtKB" id="Q9UR08"/>
    </source>
</evidence>
<evidence type="ECO:0000250" key="3">
    <source>
        <dbReference type="UniProtKB" id="W6Q3Z9"/>
    </source>
</evidence>
<evidence type="ECO:0000250" key="4">
    <source>
        <dbReference type="UniProtKB" id="W6QB15"/>
    </source>
</evidence>
<evidence type="ECO:0000250" key="5">
    <source>
        <dbReference type="UniProtKB" id="W6QP10"/>
    </source>
</evidence>
<evidence type="ECO:0000269" key="6">
    <source>
    </source>
</evidence>
<evidence type="ECO:0000303" key="7">
    <source>
    </source>
</evidence>
<evidence type="ECO:0000305" key="8"/>
<evidence type="ECO:0000305" key="9">
    <source>
    </source>
</evidence>
<comment type="function">
    <text evidence="3 4 5 6">Aristolochene synthase; part of the gene cluster that mediates the biosynthesis of PR-toxin, a bicyclic sesquiterpene belonging to the eremophilane class and acting as a mycotoxin (PubMed:24239699). The first step of the pathway is catalyzed by the aristolochene synthase which performs the cyclization of trans,trans-farnesyl diphosphate (FPP) to the bicyclic sesquiterpene aristolochene (PubMed:24239699). Following the formation of aristolochene, the non-oxygenated aristolochene is converted to the trioxygenated intermediate eremofortin B, via 7-epi-neopetasone (PubMed:24239699). This conversion appears to involve three enzymes, a hydroxysterol oxidase-like enzyme, the quinone-oxidase prx3 that forms the quinone-type-structure in the bicyclic nucleus of aristolochene with the C8-oxo group and the C-3 hydroxyl group, and the P450 monooxygenase prx9 that introduces the epoxide at the double bond between carbons 1 and 2 (By similarity) (PubMed:24239699). No monoxy or dioxy-intermediates have been reported to be released to the broth, so these three early oxidative reactions may be coupled together (PubMed:24239699). Eremofortin B is further oxidized by another P450 monooxygenase, that introduces a second epoxide between carbons 7 and 11 prior to acetylation to eremofortin A by the acetyltransferase prx11 (By similarity). The second epoxidation may be performed by a second P450 monooxygenase (PubMed:24239699). After the acetylation step, the conversion of eremofortin A to eremofortin C and then to PR-toxin requires only two enzymes (PubMed:24239699). First the conversion of eremofortin A to eremofortin C proceeds by oxidation of the side chain of the molecule at C-12 and is catalyzed by the short-chain oxidoreductase prx1 (PubMed:24239699). The cytochrome P450 monooxygenase prx8 also plays a role in this step (By similarity). The primary alcohol formed at C-12 is finally oxidized by the short-chain alcohol dehydrogenase prx4 that forms PR-toxin (PubMed:24239699).</text>
</comment>
<comment type="catalytic activity">
    <reaction evidence="1">
        <text>(2E,6E)-farnesyl diphosphate = (+)-aristolochene + diphosphate</text>
        <dbReference type="Rhea" id="RHEA:19825"/>
        <dbReference type="ChEBI" id="CHEBI:33019"/>
        <dbReference type="ChEBI" id="CHEBI:43445"/>
        <dbReference type="ChEBI" id="CHEBI:175763"/>
        <dbReference type="EC" id="4.2.3.9"/>
    </reaction>
</comment>
<comment type="cofactor">
    <cofactor evidence="2">
        <name>Mg(2+)</name>
        <dbReference type="ChEBI" id="CHEBI:18420"/>
    </cofactor>
    <text evidence="2">Binds 3 Mg(2+) ions per subunit.</text>
</comment>
<comment type="pathway">
    <text evidence="1">Sesquiterpene biosynthesis; aristolochene biosynthesis; aristolochene from farnesyl diphosphate: step 1/1.</text>
</comment>
<comment type="subunit">
    <text evidence="2">Homodimer.</text>
</comment>
<comment type="induction">
    <text evidence="6">Expression and the subsequent production of PR-toxin take place under static culture conditions (oxygen limited), whereas no expression of the PR-toxin genes occurs under the strongly aerated conditions required for optimal penicillin production (PubMed:24239699). There is a negative control of the transcription of the PR-toxin genes by the penicillin biosynthesis gene product(s), or by a regulatory peptide encoded by a small ORF inside the penicillin gene cluster (PubMed:24239699).</text>
</comment>
<comment type="similarity">
    <text evidence="8">Belongs to the terpene synthase family.</text>
</comment>
<name>PRX2_PENRW</name>
<dbReference type="EC" id="4.2.3.9" evidence="9"/>
<dbReference type="EMBL" id="AM920427">
    <property type="protein sequence ID" value="CAP80258.1"/>
    <property type="molecule type" value="Genomic_DNA"/>
</dbReference>
<dbReference type="RefSeq" id="XP_002557473.1">
    <property type="nucleotide sequence ID" value="XM_002557427.1"/>
</dbReference>
<dbReference type="SMR" id="B6H063"/>
<dbReference type="STRING" id="500485.B6H063"/>
<dbReference type="GeneID" id="8313017"/>
<dbReference type="KEGG" id="pcs:N7525_001920"/>
<dbReference type="VEuPathDB" id="FungiDB:PCH_Pc12g06310"/>
<dbReference type="eggNOG" id="ENOG502SK06">
    <property type="taxonomic scope" value="Eukaryota"/>
</dbReference>
<dbReference type="HOGENOM" id="CLU_057570_1_0_1"/>
<dbReference type="OMA" id="FQMSGNE"/>
<dbReference type="OrthoDB" id="3004402at2759"/>
<dbReference type="BioCyc" id="PCHR:PC12G06310-MONOMER"/>
<dbReference type="UniPathway" id="UPA00177">
    <property type="reaction ID" value="UER00582"/>
</dbReference>
<dbReference type="Proteomes" id="UP000000724">
    <property type="component" value="Contig Pc00c12"/>
</dbReference>
<dbReference type="GO" id="GO:0045483">
    <property type="term" value="F:aristolochene synthase activity"/>
    <property type="evidence" value="ECO:0007669"/>
    <property type="project" value="UniProtKB-EC"/>
</dbReference>
<dbReference type="GO" id="GO:0046872">
    <property type="term" value="F:metal ion binding"/>
    <property type="evidence" value="ECO:0007669"/>
    <property type="project" value="UniProtKB-KW"/>
</dbReference>
<dbReference type="GO" id="GO:0008299">
    <property type="term" value="P:isoprenoid biosynthetic process"/>
    <property type="evidence" value="ECO:0007669"/>
    <property type="project" value="UniProtKB-ARBA"/>
</dbReference>
<dbReference type="CDD" id="cd00687">
    <property type="entry name" value="Terpene_cyclase_nonplant_C1"/>
    <property type="match status" value="1"/>
</dbReference>
<dbReference type="Gene3D" id="1.10.600.10">
    <property type="entry name" value="Farnesyl Diphosphate Synthase"/>
    <property type="match status" value="1"/>
</dbReference>
<dbReference type="InterPro" id="IPR008949">
    <property type="entry name" value="Isoprenoid_synthase_dom_sf"/>
</dbReference>
<dbReference type="InterPro" id="IPR034686">
    <property type="entry name" value="Terpene_cyclase-like_2"/>
</dbReference>
<dbReference type="PANTHER" id="PTHR35201:SF4">
    <property type="entry name" value="BETA-PINACENE SYNTHASE-RELATED"/>
    <property type="match status" value="1"/>
</dbReference>
<dbReference type="PANTHER" id="PTHR35201">
    <property type="entry name" value="TERPENE SYNTHASE"/>
    <property type="match status" value="1"/>
</dbReference>
<dbReference type="Pfam" id="PF19086">
    <property type="entry name" value="Terpene_syn_C_2"/>
    <property type="match status" value="1"/>
</dbReference>
<dbReference type="SUPFAM" id="SSF48576">
    <property type="entry name" value="Terpenoid synthases"/>
    <property type="match status" value="1"/>
</dbReference>
<accession>B6H063</accession>
<feature type="chain" id="PRO_0000438191" description="Aristolochene synthase prx2">
    <location>
        <begin position="1"/>
        <end position="342"/>
    </location>
</feature>
<feature type="binding site" evidence="2">
    <location>
        <position position="115"/>
    </location>
    <ligand>
        <name>Mg(2+)</name>
        <dbReference type="ChEBI" id="CHEBI:18420"/>
        <label>1</label>
    </ligand>
</feature>
<feature type="binding site" evidence="2">
    <location>
        <position position="115"/>
    </location>
    <ligand>
        <name>Mg(2+)</name>
        <dbReference type="ChEBI" id="CHEBI:18420"/>
        <label>2</label>
    </ligand>
</feature>
<feature type="binding site" evidence="2">
    <location>
        <position position="244"/>
    </location>
    <ligand>
        <name>Mg(2+)</name>
        <dbReference type="ChEBI" id="CHEBI:18420"/>
        <label>3</label>
    </ligand>
</feature>
<feature type="binding site" evidence="2">
    <location>
        <position position="248"/>
    </location>
    <ligand>
        <name>Mg(2+)</name>
        <dbReference type="ChEBI" id="CHEBI:18420"/>
        <label>3</label>
    </ligand>
</feature>
<feature type="binding site" evidence="2">
    <location>
        <position position="252"/>
    </location>
    <ligand>
        <name>Mg(2+)</name>
        <dbReference type="ChEBI" id="CHEBI:18420"/>
        <label>3</label>
    </ligand>
</feature>
<feature type="binding site" evidence="2">
    <location>
        <position position="340"/>
    </location>
    <ligand>
        <name>(2E,6E)-farnesyl diphosphate</name>
        <dbReference type="ChEBI" id="CHEBI:175763"/>
    </ligand>
</feature>
<feature type="binding site" evidence="2">
    <location>
        <position position="341"/>
    </location>
    <ligand>
        <name>(2E,6E)-farnesyl diphosphate</name>
        <dbReference type="ChEBI" id="CHEBI:175763"/>
    </ligand>
</feature>
<feature type="site" description="Important for catalytic activity" evidence="1">
    <location>
        <position position="92"/>
    </location>
</feature>
<feature type="site" description="Important for catalytic activity" evidence="1">
    <location>
        <position position="112"/>
    </location>
</feature>
<feature type="site" description="Important for catalytic activity" evidence="1">
    <location>
        <position position="178"/>
    </location>
</feature>
<feature type="site" description="Important for catalytic activity" evidence="1">
    <location>
        <position position="334"/>
    </location>
</feature>
<keyword id="KW-0456">Lyase</keyword>
<keyword id="KW-0460">Magnesium</keyword>
<keyword id="KW-0479">Metal-binding</keyword>
<keyword id="KW-1185">Reference proteome</keyword>
<protein>
    <recommendedName>
        <fullName evidence="7">Aristolochene synthase prx2</fullName>
        <shortName evidence="7">AS</shortName>
        <ecNumber evidence="9">4.2.3.9</ecNumber>
    </recommendedName>
    <alternativeName>
        <fullName evidence="7">PR-toxin biosynthesis protein 2</fullName>
    </alternativeName>
    <alternativeName>
        <fullName evidence="7">Sesquiterpene cyclase prx2</fullName>
    </alternativeName>
</protein>